<comment type="function">
    <text evidence="1">May be involved in the cellular control mechanism of the secretion of toxins from the gland into the venom.</text>
</comment>
<comment type="subcellular location">
    <subcellularLocation>
        <location evidence="3">Cytoplasm</location>
    </subcellularLocation>
    <text evidence="1">Not found in venom.</text>
</comment>
<comment type="tissue specificity">
    <text>Expressed by the venom gland.</text>
</comment>
<comment type="similarity">
    <text evidence="3">Belongs to the calmodulin family. Calglandulin subfamily.</text>
</comment>
<evidence type="ECO:0000250" key="1"/>
<evidence type="ECO:0000255" key="2">
    <source>
        <dbReference type="PROSITE-ProRule" id="PRU00448"/>
    </source>
</evidence>
<evidence type="ECO:0000305" key="3"/>
<feature type="chain" id="PRO_0000073553" description="Calglandulin">
    <location>
        <begin position="1"/>
        <end position="156"/>
    </location>
</feature>
<feature type="domain" description="EF-hand 1" evidence="2">
    <location>
        <begin position="8"/>
        <end position="43"/>
    </location>
</feature>
<feature type="domain" description="EF-hand 2" evidence="2">
    <location>
        <begin position="44"/>
        <end position="79"/>
    </location>
</feature>
<feature type="domain" description="EF-hand 3" evidence="2">
    <location>
        <begin position="82"/>
        <end position="117"/>
    </location>
</feature>
<feature type="domain" description="EF-hand 4" evidence="2">
    <location>
        <begin position="118"/>
        <end position="153"/>
    </location>
</feature>
<feature type="binding site" evidence="2">
    <location>
        <position position="131"/>
    </location>
    <ligand>
        <name>Ca(2+)</name>
        <dbReference type="ChEBI" id="CHEBI:29108"/>
    </ligand>
</feature>
<feature type="binding site" evidence="2">
    <location>
        <position position="133"/>
    </location>
    <ligand>
        <name>Ca(2+)</name>
        <dbReference type="ChEBI" id="CHEBI:29108"/>
    </ligand>
</feature>
<feature type="binding site" evidence="2">
    <location>
        <position position="135"/>
    </location>
    <ligand>
        <name>Ca(2+)</name>
        <dbReference type="ChEBI" id="CHEBI:29108"/>
    </ligand>
</feature>
<feature type="binding site" evidence="2">
    <location>
        <position position="137"/>
    </location>
    <ligand>
        <name>Ca(2+)</name>
        <dbReference type="ChEBI" id="CHEBI:29108"/>
    </ligand>
</feature>
<feature type="binding site" evidence="2">
    <location>
        <position position="142"/>
    </location>
    <ligand>
        <name>Ca(2+)</name>
        <dbReference type="ChEBI" id="CHEBI:29108"/>
    </ligand>
</feature>
<reference key="1">
    <citation type="journal article" date="2005" name="Cell. Mol. Life Sci.">
        <title>Identification and analysis of venom gland-specific genes from the coastal taipan (Oxyuranus scutellatus) and related species.</title>
        <authorList>
            <person name="St Pierre L."/>
            <person name="Woods R."/>
            <person name="Earl S.T.H."/>
            <person name="Masci P.P."/>
            <person name="Lavin M.F."/>
        </authorList>
    </citation>
    <scope>NUCLEOTIDE SEQUENCE [MRNA]</scope>
    <source>
        <tissue>Venom gland</tissue>
    </source>
</reference>
<dbReference type="EMBL" id="DQ084027">
    <property type="protein sequence ID" value="AAZ38972.1"/>
    <property type="molecule type" value="mRNA"/>
</dbReference>
<dbReference type="SMR" id="Q3SB15"/>
<dbReference type="GO" id="GO:0005737">
    <property type="term" value="C:cytoplasm"/>
    <property type="evidence" value="ECO:0007669"/>
    <property type="project" value="UniProtKB-SubCell"/>
</dbReference>
<dbReference type="GO" id="GO:0016460">
    <property type="term" value="C:myosin II complex"/>
    <property type="evidence" value="ECO:0007669"/>
    <property type="project" value="TreeGrafter"/>
</dbReference>
<dbReference type="GO" id="GO:0005509">
    <property type="term" value="F:calcium ion binding"/>
    <property type="evidence" value="ECO:0007669"/>
    <property type="project" value="InterPro"/>
</dbReference>
<dbReference type="CDD" id="cd00051">
    <property type="entry name" value="EFh"/>
    <property type="match status" value="1"/>
</dbReference>
<dbReference type="FunFam" id="1.10.238.10:FF:000163">
    <property type="entry name" value="Calmodulin like 6"/>
    <property type="match status" value="1"/>
</dbReference>
<dbReference type="Gene3D" id="1.10.238.10">
    <property type="entry name" value="EF-hand"/>
    <property type="match status" value="2"/>
</dbReference>
<dbReference type="InterPro" id="IPR050230">
    <property type="entry name" value="CALM/Myosin/TropC-like"/>
</dbReference>
<dbReference type="InterPro" id="IPR011992">
    <property type="entry name" value="EF-hand-dom_pair"/>
</dbReference>
<dbReference type="InterPro" id="IPR018247">
    <property type="entry name" value="EF_Hand_1_Ca_BS"/>
</dbReference>
<dbReference type="InterPro" id="IPR002048">
    <property type="entry name" value="EF_hand_dom"/>
</dbReference>
<dbReference type="PANTHER" id="PTHR23048:SF56">
    <property type="entry name" value="CALMODULIN 2"/>
    <property type="match status" value="1"/>
</dbReference>
<dbReference type="PANTHER" id="PTHR23048">
    <property type="entry name" value="MYOSIN LIGHT CHAIN 1, 3"/>
    <property type="match status" value="1"/>
</dbReference>
<dbReference type="Pfam" id="PF13499">
    <property type="entry name" value="EF-hand_7"/>
    <property type="match status" value="1"/>
</dbReference>
<dbReference type="Pfam" id="PF13833">
    <property type="entry name" value="EF-hand_8"/>
    <property type="match status" value="1"/>
</dbReference>
<dbReference type="SMART" id="SM00054">
    <property type="entry name" value="EFh"/>
    <property type="match status" value="4"/>
</dbReference>
<dbReference type="SUPFAM" id="SSF47473">
    <property type="entry name" value="EF-hand"/>
    <property type="match status" value="1"/>
</dbReference>
<dbReference type="PROSITE" id="PS00018">
    <property type="entry name" value="EF_HAND_1"/>
    <property type="match status" value="1"/>
</dbReference>
<dbReference type="PROSITE" id="PS50222">
    <property type="entry name" value="EF_HAND_2"/>
    <property type="match status" value="4"/>
</dbReference>
<name>CALGL_OXYSC</name>
<keyword id="KW-0106">Calcium</keyword>
<keyword id="KW-0963">Cytoplasm</keyword>
<keyword id="KW-0479">Metal-binding</keyword>
<keyword id="KW-0677">Repeat</keyword>
<accession>Q3SB15</accession>
<sequence length="156" mass="17767">MAATLTPEQITEYKGIFEMFDEEGNGLVKTDDLESLMSLIGINPTKRDLANMAKDVDKDKKGTFNCDGFLVLMGIYHEKSKNQDEELRAAFKVFDKEHKGYIEWDTLKYVLMNAGEPLNEHEAELMMKEADKDGDGTIDYEEFVAMMTGESFKLTQ</sequence>
<protein>
    <recommendedName>
        <fullName>Calglandulin</fullName>
    </recommendedName>
</protein>
<organism>
    <name type="scientific">Oxyuranus scutellatus scutellatus</name>
    <name type="common">Australian taipan</name>
    <name type="synonym">Coastal taipan</name>
    <dbReference type="NCBI Taxonomy" id="8667"/>
    <lineage>
        <taxon>Eukaryota</taxon>
        <taxon>Metazoa</taxon>
        <taxon>Chordata</taxon>
        <taxon>Craniata</taxon>
        <taxon>Vertebrata</taxon>
        <taxon>Euteleostomi</taxon>
        <taxon>Lepidosauria</taxon>
        <taxon>Squamata</taxon>
        <taxon>Bifurcata</taxon>
        <taxon>Unidentata</taxon>
        <taxon>Episquamata</taxon>
        <taxon>Toxicofera</taxon>
        <taxon>Serpentes</taxon>
        <taxon>Colubroidea</taxon>
        <taxon>Elapidae</taxon>
        <taxon>Hydrophiinae</taxon>
        <taxon>Oxyuranus</taxon>
    </lineage>
</organism>
<proteinExistence type="evidence at transcript level"/>